<proteinExistence type="inferred from homology"/>
<organism>
    <name type="scientific">Drosophila virilis</name>
    <name type="common">Fruit fly</name>
    <dbReference type="NCBI Taxonomy" id="7244"/>
    <lineage>
        <taxon>Eukaryota</taxon>
        <taxon>Metazoa</taxon>
        <taxon>Ecdysozoa</taxon>
        <taxon>Arthropoda</taxon>
        <taxon>Hexapoda</taxon>
        <taxon>Insecta</taxon>
        <taxon>Pterygota</taxon>
        <taxon>Neoptera</taxon>
        <taxon>Endopterygota</taxon>
        <taxon>Diptera</taxon>
        <taxon>Brachycera</taxon>
        <taxon>Muscomorpha</taxon>
        <taxon>Ephydroidea</taxon>
        <taxon>Drosophilidae</taxon>
        <taxon>Drosophila</taxon>
    </lineage>
</organism>
<gene>
    <name evidence="1" type="primary">dbo</name>
    <name type="ORF">GJ11367</name>
</gene>
<dbReference type="EMBL" id="CH940647">
    <property type="protein sequence ID" value="EDW70753.1"/>
    <property type="molecule type" value="Genomic_DNA"/>
</dbReference>
<dbReference type="RefSeq" id="XP_002048411.2">
    <property type="nucleotide sequence ID" value="XM_002048375.2"/>
</dbReference>
<dbReference type="RefSeq" id="XP_015030453.1">
    <property type="nucleotide sequence ID" value="XM_015174967.3"/>
</dbReference>
<dbReference type="SMR" id="B4LIG6"/>
<dbReference type="FunCoup" id="B4LIG6">
    <property type="interactions" value="1824"/>
</dbReference>
<dbReference type="STRING" id="7244.B4LIG6"/>
<dbReference type="EnsemblMetazoa" id="FBtr0433722">
    <property type="protein sequence ID" value="FBpp0390840"/>
    <property type="gene ID" value="FBgn0198626"/>
</dbReference>
<dbReference type="EnsemblMetazoa" id="XM_015174967.2">
    <property type="protein sequence ID" value="XP_015030453.1"/>
    <property type="gene ID" value="LOC6622349"/>
</dbReference>
<dbReference type="GeneID" id="6622349"/>
<dbReference type="KEGG" id="dvi:6622349"/>
<dbReference type="CTD" id="53556"/>
<dbReference type="eggNOG" id="KOG4441">
    <property type="taxonomic scope" value="Eukaryota"/>
</dbReference>
<dbReference type="HOGENOM" id="CLU_004253_12_0_1"/>
<dbReference type="InParanoid" id="B4LIG6"/>
<dbReference type="OMA" id="CAVFNNL"/>
<dbReference type="OrthoDB" id="45365at2759"/>
<dbReference type="PhylomeDB" id="B4LIG6"/>
<dbReference type="UniPathway" id="UPA00143"/>
<dbReference type="Proteomes" id="UP000008792">
    <property type="component" value="Unassembled WGS sequence"/>
</dbReference>
<dbReference type="GO" id="GO:0031463">
    <property type="term" value="C:Cul3-RING ubiquitin ligase complex"/>
    <property type="evidence" value="ECO:0007669"/>
    <property type="project" value="EnsemblMetazoa"/>
</dbReference>
<dbReference type="GO" id="GO:0003779">
    <property type="term" value="F:actin binding"/>
    <property type="evidence" value="ECO:0007669"/>
    <property type="project" value="UniProtKB-KW"/>
</dbReference>
<dbReference type="GO" id="GO:1990756">
    <property type="term" value="F:ubiquitin-like ligase-substrate adaptor activity"/>
    <property type="evidence" value="ECO:0007669"/>
    <property type="project" value="EnsemblMetazoa"/>
</dbReference>
<dbReference type="GO" id="GO:0045886">
    <property type="term" value="P:negative regulation of synaptic assembly at neuromuscular junction"/>
    <property type="evidence" value="ECO:0000250"/>
    <property type="project" value="UniProtKB"/>
</dbReference>
<dbReference type="GO" id="GO:0043161">
    <property type="term" value="P:proteasome-mediated ubiquitin-dependent protein catabolic process"/>
    <property type="evidence" value="ECO:0007669"/>
    <property type="project" value="EnsemblMetazoa"/>
</dbReference>
<dbReference type="GO" id="GO:0016567">
    <property type="term" value="P:protein ubiquitination"/>
    <property type="evidence" value="ECO:0007669"/>
    <property type="project" value="UniProtKB-UniPathway"/>
</dbReference>
<dbReference type="CDD" id="cd18459">
    <property type="entry name" value="BACK_KLHL20"/>
    <property type="match status" value="1"/>
</dbReference>
<dbReference type="CDD" id="cd18249">
    <property type="entry name" value="BTB_POZ_KLHL20_KLEIP"/>
    <property type="match status" value="1"/>
</dbReference>
<dbReference type="FunFam" id="1.25.40.420:FF:000001">
    <property type="entry name" value="Kelch-like family member 12"/>
    <property type="match status" value="1"/>
</dbReference>
<dbReference type="FunFam" id="2.120.10.80:FF:000006">
    <property type="entry name" value="Kelch-like family member 20"/>
    <property type="match status" value="1"/>
</dbReference>
<dbReference type="FunFam" id="3.30.710.10:FF:000001">
    <property type="entry name" value="Kelch-like family member 20"/>
    <property type="match status" value="1"/>
</dbReference>
<dbReference type="Gene3D" id="1.25.40.420">
    <property type="match status" value="1"/>
</dbReference>
<dbReference type="Gene3D" id="2.120.10.80">
    <property type="entry name" value="Kelch-type beta propeller"/>
    <property type="match status" value="1"/>
</dbReference>
<dbReference type="Gene3D" id="3.30.710.10">
    <property type="entry name" value="Potassium Channel Kv1.1, Chain A"/>
    <property type="match status" value="1"/>
</dbReference>
<dbReference type="InterPro" id="IPR011705">
    <property type="entry name" value="BACK"/>
</dbReference>
<dbReference type="InterPro" id="IPR017096">
    <property type="entry name" value="BTB-kelch_protein"/>
</dbReference>
<dbReference type="InterPro" id="IPR000210">
    <property type="entry name" value="BTB/POZ_dom"/>
</dbReference>
<dbReference type="InterPro" id="IPR015915">
    <property type="entry name" value="Kelch-typ_b-propeller"/>
</dbReference>
<dbReference type="InterPro" id="IPR006652">
    <property type="entry name" value="Kelch_1"/>
</dbReference>
<dbReference type="InterPro" id="IPR011333">
    <property type="entry name" value="SKP1/BTB/POZ_sf"/>
</dbReference>
<dbReference type="PANTHER" id="PTHR24412">
    <property type="entry name" value="KELCH PROTEIN"/>
    <property type="match status" value="1"/>
</dbReference>
<dbReference type="PANTHER" id="PTHR24412:SF451">
    <property type="entry name" value="KELCH-LIKE PROTEIN 20"/>
    <property type="match status" value="1"/>
</dbReference>
<dbReference type="Pfam" id="PF07707">
    <property type="entry name" value="BACK"/>
    <property type="match status" value="1"/>
</dbReference>
<dbReference type="Pfam" id="PF00651">
    <property type="entry name" value="BTB"/>
    <property type="match status" value="1"/>
</dbReference>
<dbReference type="Pfam" id="PF01344">
    <property type="entry name" value="Kelch_1"/>
    <property type="match status" value="6"/>
</dbReference>
<dbReference type="PIRSF" id="PIRSF037037">
    <property type="entry name" value="Kelch-like_protein_gigaxonin"/>
    <property type="match status" value="1"/>
</dbReference>
<dbReference type="SMART" id="SM00875">
    <property type="entry name" value="BACK"/>
    <property type="match status" value="1"/>
</dbReference>
<dbReference type="SMART" id="SM00225">
    <property type="entry name" value="BTB"/>
    <property type="match status" value="1"/>
</dbReference>
<dbReference type="SMART" id="SM00612">
    <property type="entry name" value="Kelch"/>
    <property type="match status" value="6"/>
</dbReference>
<dbReference type="SUPFAM" id="SSF117281">
    <property type="entry name" value="Kelch motif"/>
    <property type="match status" value="1"/>
</dbReference>
<dbReference type="SUPFAM" id="SSF54695">
    <property type="entry name" value="POZ domain"/>
    <property type="match status" value="1"/>
</dbReference>
<dbReference type="PROSITE" id="PS50097">
    <property type="entry name" value="BTB"/>
    <property type="match status" value="1"/>
</dbReference>
<sequence length="624" mass="68923">MGDPLLPGSTGLGSGPAAAATGGSGTTGTGLGSGGTSGAERPPSPARLTHTSEKHPKVTLTELNMLRRHRELCDVVLNVGGRKIFAHRVILSACSSYFCAMFTGELEESRQTEVTIRDIDENAMELLIDFCYTAHIIVEESNVQTLLPAACLLQLVEIQDICCEFLKRQLDPTNCLGIRAFADTHSCRELLRIADKFTQHNFQEVMESEEFLLLPVGQLVDIICSDELNVRSEEQVFNAVMSWLKYNVAERRQHLAQVLQHVRLPLLSPKFLVGTVGSDLLVRSDEACRDLVDEAKNYLLLPQERPLMQGPRTRPRKPTRRGEVLFAVGGWCSGDAIASVERFDPQTNDWKMVAPMSKRRCGVGVAVLNDLLYAVGGHDGQSYLNSIERYDPQTNQWSCDVAPTTSCRTSVGVAVLDGFLYAVGGQDGVQCLNHVERYDPKENKWSKVAPMTTRRLGVAVAVLSGHLYAIGGSDGQCPLNTVERYDPRQNKWVAVNPMSTRRKHLGCAVFNNYIYAVGGRDDCMELSSAERYNPLTNTWSPIVAMTSRRSGVGLAVVNGQLYAVGGFDGSAYLKTIEVYDPETNQWRLCGCMNYRRLGGGVGVMRAPQTENYMWCDNSFLLHDR</sequence>
<protein>
    <recommendedName>
        <fullName evidence="1">Kelch-like protein diablo</fullName>
    </recommendedName>
</protein>
<accession>B4LIG6</accession>
<feature type="chain" id="PRO_0000379954" description="Kelch-like protein diablo">
    <location>
        <begin position="1"/>
        <end position="624"/>
    </location>
</feature>
<feature type="domain" description="BTB" evidence="4">
    <location>
        <begin position="73"/>
        <end position="140"/>
    </location>
</feature>
<feature type="domain" description="BACK" evidence="3">
    <location>
        <begin position="175"/>
        <end position="277"/>
    </location>
</feature>
<feature type="repeat" description="Kelch 1" evidence="3">
    <location>
        <begin position="324"/>
        <end position="370"/>
    </location>
</feature>
<feature type="repeat" description="Kelch 2" evidence="3">
    <location>
        <begin position="372"/>
        <end position="418"/>
    </location>
</feature>
<feature type="repeat" description="Kelch 3" evidence="3">
    <location>
        <begin position="419"/>
        <end position="465"/>
    </location>
</feature>
<feature type="repeat" description="Kelch 4" evidence="3">
    <location>
        <begin position="467"/>
        <end position="512"/>
    </location>
</feature>
<feature type="repeat" description="Kelch 5" evidence="3">
    <location>
        <begin position="514"/>
        <end position="559"/>
    </location>
</feature>
<feature type="repeat" description="Kelch 6" evidence="3">
    <location>
        <begin position="560"/>
        <end position="606"/>
    </location>
</feature>
<feature type="region of interest" description="Disordered" evidence="5">
    <location>
        <begin position="1"/>
        <end position="55"/>
    </location>
</feature>
<feature type="compositionally biased region" description="Low complexity" evidence="5">
    <location>
        <begin position="1"/>
        <end position="21"/>
    </location>
</feature>
<feature type="compositionally biased region" description="Gly residues" evidence="5">
    <location>
        <begin position="22"/>
        <end position="37"/>
    </location>
</feature>
<name>KLHDB_DROVI</name>
<evidence type="ECO:0000250" key="1">
    <source>
        <dbReference type="UniProtKB" id="Q9VUU5"/>
    </source>
</evidence>
<evidence type="ECO:0000250" key="2">
    <source>
        <dbReference type="UniProtKB" id="Q9Y2M5"/>
    </source>
</evidence>
<evidence type="ECO:0000255" key="3"/>
<evidence type="ECO:0000255" key="4">
    <source>
        <dbReference type="PROSITE-ProRule" id="PRU00037"/>
    </source>
</evidence>
<evidence type="ECO:0000256" key="5">
    <source>
        <dbReference type="SAM" id="MobiDB-lite"/>
    </source>
</evidence>
<evidence type="ECO:0000312" key="6">
    <source>
        <dbReference type="EMBL" id="EDW70753.1"/>
    </source>
</evidence>
<reference evidence="6" key="1">
    <citation type="journal article" date="2007" name="Nature">
        <title>Evolution of genes and genomes on the Drosophila phylogeny.</title>
        <authorList>
            <consortium name="Drosophila 12 genomes consortium"/>
        </authorList>
    </citation>
    <scope>NUCLEOTIDE SEQUENCE [LARGE SCALE GENOMIC DNA]</scope>
    <source>
        <strain evidence="6">Tucson 15010-1051.87</strain>
    </source>
</reference>
<comment type="function">
    <text evidence="1 2">Probable substrate-specific adapter of an E3 ubiquitin-protein ligase complex which mediates the ubiquitination and subsequent proteasomal degradation of target proteins. May have a role in synapse differentiation and growth (By similarity).</text>
</comment>
<comment type="pathway">
    <text evidence="2">Protein modification; protein ubiquitination.</text>
</comment>
<keyword id="KW-0009">Actin-binding</keyword>
<keyword id="KW-0880">Kelch repeat</keyword>
<keyword id="KW-1185">Reference proteome</keyword>
<keyword id="KW-0677">Repeat</keyword>
<keyword id="KW-0833">Ubl conjugation pathway</keyword>